<accession>P58949</accession>
<reference key="1">
    <citation type="journal article" date="2002" name="Nature">
        <title>Comparison of the genomes of two Xanthomonas pathogens with differing host specificities.</title>
        <authorList>
            <person name="da Silva A.C.R."/>
            <person name="Ferro J.A."/>
            <person name="Reinach F.C."/>
            <person name="Farah C.S."/>
            <person name="Furlan L.R."/>
            <person name="Quaggio R.B."/>
            <person name="Monteiro-Vitorello C.B."/>
            <person name="Van Sluys M.A."/>
            <person name="Almeida N.F. Jr."/>
            <person name="Alves L.M.C."/>
            <person name="do Amaral A.M."/>
            <person name="Bertolini M.C."/>
            <person name="Camargo L.E.A."/>
            <person name="Camarotte G."/>
            <person name="Cannavan F."/>
            <person name="Cardozo J."/>
            <person name="Chambergo F."/>
            <person name="Ciapina L.P."/>
            <person name="Cicarelli R.M.B."/>
            <person name="Coutinho L.L."/>
            <person name="Cursino-Santos J.R."/>
            <person name="El-Dorry H."/>
            <person name="Faria J.B."/>
            <person name="Ferreira A.J.S."/>
            <person name="Ferreira R.C.C."/>
            <person name="Ferro M.I.T."/>
            <person name="Formighieri E.F."/>
            <person name="Franco M.C."/>
            <person name="Greggio C.C."/>
            <person name="Gruber A."/>
            <person name="Katsuyama A.M."/>
            <person name="Kishi L.T."/>
            <person name="Leite R.P."/>
            <person name="Lemos E.G.M."/>
            <person name="Lemos M.V.F."/>
            <person name="Locali E.C."/>
            <person name="Machado M.A."/>
            <person name="Madeira A.M.B.N."/>
            <person name="Martinez-Rossi N.M."/>
            <person name="Martins E.C."/>
            <person name="Meidanis J."/>
            <person name="Menck C.F.M."/>
            <person name="Miyaki C.Y."/>
            <person name="Moon D.H."/>
            <person name="Moreira L.M."/>
            <person name="Novo M.T.M."/>
            <person name="Okura V.K."/>
            <person name="Oliveira M.C."/>
            <person name="Oliveira V.R."/>
            <person name="Pereira H.A."/>
            <person name="Rossi A."/>
            <person name="Sena J.A.D."/>
            <person name="Silva C."/>
            <person name="de Souza R.F."/>
            <person name="Spinola L.A.F."/>
            <person name="Takita M.A."/>
            <person name="Tamura R.E."/>
            <person name="Teixeira E.C."/>
            <person name="Tezza R.I.D."/>
            <person name="Trindade dos Santos M."/>
            <person name="Truffi D."/>
            <person name="Tsai S.M."/>
            <person name="White F.F."/>
            <person name="Setubal J.C."/>
            <person name="Kitajima J.P."/>
        </authorList>
    </citation>
    <scope>NUCLEOTIDE SEQUENCE [LARGE SCALE GENOMIC DNA]</scope>
    <source>
        <strain>ATCC 33913 / DSM 3586 / NCPPB 528 / LMG 568 / P 25</strain>
    </source>
</reference>
<keyword id="KW-0004">4Fe-4S</keyword>
<keyword id="KW-0028">Amino-acid biosynthesis</keyword>
<keyword id="KW-0100">Branched-chain amino acid biosynthesis</keyword>
<keyword id="KW-0408">Iron</keyword>
<keyword id="KW-0411">Iron-sulfur</keyword>
<keyword id="KW-0432">Leucine biosynthesis</keyword>
<keyword id="KW-0456">Lyase</keyword>
<keyword id="KW-0479">Metal-binding</keyword>
<keyword id="KW-1185">Reference proteome</keyword>
<dbReference type="EC" id="4.2.1.33" evidence="1"/>
<dbReference type="EMBL" id="AE008922">
    <property type="protein sequence ID" value="AAM42601.1"/>
    <property type="molecule type" value="Genomic_DNA"/>
</dbReference>
<dbReference type="RefSeq" id="NP_638677.1">
    <property type="nucleotide sequence ID" value="NC_003902.1"/>
</dbReference>
<dbReference type="RefSeq" id="WP_011038430.1">
    <property type="nucleotide sequence ID" value="NC_003902.1"/>
</dbReference>
<dbReference type="SMR" id="P58949"/>
<dbReference type="STRING" id="190485.XCC3331"/>
<dbReference type="EnsemblBacteria" id="AAM42601">
    <property type="protein sequence ID" value="AAM42601"/>
    <property type="gene ID" value="XCC3331"/>
</dbReference>
<dbReference type="GeneID" id="58012135"/>
<dbReference type="KEGG" id="xcc:XCC3331"/>
<dbReference type="PATRIC" id="fig|190485.4.peg.3562"/>
<dbReference type="eggNOG" id="COG0065">
    <property type="taxonomic scope" value="Bacteria"/>
</dbReference>
<dbReference type="HOGENOM" id="CLU_006714_3_4_6"/>
<dbReference type="OrthoDB" id="9802769at2"/>
<dbReference type="UniPathway" id="UPA00048">
    <property type="reaction ID" value="UER00071"/>
</dbReference>
<dbReference type="Proteomes" id="UP000001010">
    <property type="component" value="Chromosome"/>
</dbReference>
<dbReference type="GO" id="GO:0003861">
    <property type="term" value="F:3-isopropylmalate dehydratase activity"/>
    <property type="evidence" value="ECO:0007669"/>
    <property type="project" value="UniProtKB-UniRule"/>
</dbReference>
<dbReference type="GO" id="GO:0051539">
    <property type="term" value="F:4 iron, 4 sulfur cluster binding"/>
    <property type="evidence" value="ECO:0007669"/>
    <property type="project" value="UniProtKB-KW"/>
</dbReference>
<dbReference type="GO" id="GO:0046872">
    <property type="term" value="F:metal ion binding"/>
    <property type="evidence" value="ECO:0007669"/>
    <property type="project" value="UniProtKB-KW"/>
</dbReference>
<dbReference type="GO" id="GO:0009098">
    <property type="term" value="P:L-leucine biosynthetic process"/>
    <property type="evidence" value="ECO:0007669"/>
    <property type="project" value="UniProtKB-UniRule"/>
</dbReference>
<dbReference type="CDD" id="cd01583">
    <property type="entry name" value="IPMI"/>
    <property type="match status" value="1"/>
</dbReference>
<dbReference type="FunFam" id="3.30.499.10:FF:000007">
    <property type="entry name" value="3-isopropylmalate dehydratase large subunit"/>
    <property type="match status" value="1"/>
</dbReference>
<dbReference type="Gene3D" id="3.30.499.10">
    <property type="entry name" value="Aconitase, domain 3"/>
    <property type="match status" value="2"/>
</dbReference>
<dbReference type="HAMAP" id="MF_01026">
    <property type="entry name" value="LeuC_type1"/>
    <property type="match status" value="1"/>
</dbReference>
<dbReference type="InterPro" id="IPR004430">
    <property type="entry name" value="3-IsopropMal_deHydase_lsu"/>
</dbReference>
<dbReference type="InterPro" id="IPR015931">
    <property type="entry name" value="Acnase/IPM_dHydase_lsu_aba_1/3"/>
</dbReference>
<dbReference type="InterPro" id="IPR001030">
    <property type="entry name" value="Acoase/IPM_deHydtase_lsu_aba"/>
</dbReference>
<dbReference type="InterPro" id="IPR018136">
    <property type="entry name" value="Aconitase_4Fe-4S_BS"/>
</dbReference>
<dbReference type="InterPro" id="IPR036008">
    <property type="entry name" value="Aconitase_4Fe-4S_dom"/>
</dbReference>
<dbReference type="InterPro" id="IPR050067">
    <property type="entry name" value="IPM_dehydratase_rel_enz"/>
</dbReference>
<dbReference type="InterPro" id="IPR033941">
    <property type="entry name" value="IPMI_cat"/>
</dbReference>
<dbReference type="NCBIfam" id="TIGR00170">
    <property type="entry name" value="leuC"/>
    <property type="match status" value="1"/>
</dbReference>
<dbReference type="NCBIfam" id="NF004016">
    <property type="entry name" value="PRK05478.1"/>
    <property type="match status" value="1"/>
</dbReference>
<dbReference type="NCBIfam" id="NF009116">
    <property type="entry name" value="PRK12466.1"/>
    <property type="match status" value="1"/>
</dbReference>
<dbReference type="PANTHER" id="PTHR43822:SF9">
    <property type="entry name" value="3-ISOPROPYLMALATE DEHYDRATASE"/>
    <property type="match status" value="1"/>
</dbReference>
<dbReference type="PANTHER" id="PTHR43822">
    <property type="entry name" value="HOMOACONITASE, MITOCHONDRIAL-RELATED"/>
    <property type="match status" value="1"/>
</dbReference>
<dbReference type="Pfam" id="PF00330">
    <property type="entry name" value="Aconitase"/>
    <property type="match status" value="1"/>
</dbReference>
<dbReference type="PRINTS" id="PR00415">
    <property type="entry name" value="ACONITASE"/>
</dbReference>
<dbReference type="SUPFAM" id="SSF53732">
    <property type="entry name" value="Aconitase iron-sulfur domain"/>
    <property type="match status" value="1"/>
</dbReference>
<dbReference type="PROSITE" id="PS00450">
    <property type="entry name" value="ACONITASE_1"/>
    <property type="match status" value="1"/>
</dbReference>
<dbReference type="PROSITE" id="PS01244">
    <property type="entry name" value="ACONITASE_2"/>
    <property type="match status" value="1"/>
</dbReference>
<comment type="function">
    <text evidence="1">Catalyzes the isomerization between 2-isopropylmalate and 3-isopropylmalate, via the formation of 2-isopropylmaleate.</text>
</comment>
<comment type="catalytic activity">
    <reaction evidence="1">
        <text>(2R,3S)-3-isopropylmalate = (2S)-2-isopropylmalate</text>
        <dbReference type="Rhea" id="RHEA:32287"/>
        <dbReference type="ChEBI" id="CHEBI:1178"/>
        <dbReference type="ChEBI" id="CHEBI:35121"/>
        <dbReference type="EC" id="4.2.1.33"/>
    </reaction>
</comment>
<comment type="cofactor">
    <cofactor evidence="1">
        <name>[4Fe-4S] cluster</name>
        <dbReference type="ChEBI" id="CHEBI:49883"/>
    </cofactor>
    <text evidence="1">Binds 1 [4Fe-4S] cluster per subunit.</text>
</comment>
<comment type="pathway">
    <text evidence="1">Amino-acid biosynthesis; L-leucine biosynthesis; L-leucine from 3-methyl-2-oxobutanoate: step 2/4.</text>
</comment>
<comment type="subunit">
    <text evidence="1">Heterodimer of LeuC and LeuD.</text>
</comment>
<comment type="similarity">
    <text evidence="1">Belongs to the aconitase/IPM isomerase family. LeuC type 1 subfamily.</text>
</comment>
<feature type="chain" id="PRO_0000076842" description="3-isopropylmalate dehydratase large subunit">
    <location>
        <begin position="1"/>
        <end position="479"/>
    </location>
</feature>
<feature type="binding site" evidence="1">
    <location>
        <position position="353"/>
    </location>
    <ligand>
        <name>[4Fe-4S] cluster</name>
        <dbReference type="ChEBI" id="CHEBI:49883"/>
    </ligand>
</feature>
<feature type="binding site" evidence="1">
    <location>
        <position position="414"/>
    </location>
    <ligand>
        <name>[4Fe-4S] cluster</name>
        <dbReference type="ChEBI" id="CHEBI:49883"/>
    </ligand>
</feature>
<feature type="binding site" evidence="1">
    <location>
        <position position="417"/>
    </location>
    <ligand>
        <name>[4Fe-4S] cluster</name>
        <dbReference type="ChEBI" id="CHEBI:49883"/>
    </ligand>
</feature>
<name>LEUC_XANCP</name>
<proteinExistence type="inferred from homology"/>
<protein>
    <recommendedName>
        <fullName evidence="1">3-isopropylmalate dehydratase large subunit</fullName>
        <ecNumber evidence="1">4.2.1.33</ecNumber>
    </recommendedName>
    <alternativeName>
        <fullName evidence="1">Alpha-IPM isomerase</fullName>
        <shortName evidence="1">IPMI</shortName>
    </alternativeName>
    <alternativeName>
        <fullName evidence="1">Isopropylmalate isomerase</fullName>
    </alternativeName>
</protein>
<sequence>MTAKTLYDKLWEMHEVTRRDDGSSLIYIDRHILHEVTSPQAFEGLRLAGRKPWRIDANIATPDHNVPTTRAERQGGLESISDEVSRLQVQTLDENCDDFGILEFKMNDTRQGIVHVVGPEQGATLPGMTVVCGDSHTSTHGAFGALAHGIGTSEVEHVLATQCLIAKKMKNLQVRVEGTLPFGVTAKDIVLAVIGKIGTAGGNGHALEFAGSAIRALSMEGRMTICNMSIEAGARVGMVAVDEKTIAYVKGRPFAPKGADWDAAVALWRTLVSDADASFDTVVELRAEDIKPQVSWGTSPEMVVAIDQQVPDPAAEQDPTKRDSIQRALKYMGLRANQPITEIHLDRVFIGSCTNSRIEDLRAAAAVAKGRKVASTIKQALVVPGSGLVKAQAEAEGLDKIFLDAGFEWREPGCSMCLAMNPDKLGSGEHCASTSNRNFEGRQGAGGRTHLVSPAMAAAAAVSGHFVDVRELQGIETRE</sequence>
<gene>
    <name evidence="1" type="primary">leuC</name>
    <name type="ordered locus">XCC3331</name>
</gene>
<evidence type="ECO:0000255" key="1">
    <source>
        <dbReference type="HAMAP-Rule" id="MF_01026"/>
    </source>
</evidence>
<organism>
    <name type="scientific">Xanthomonas campestris pv. campestris (strain ATCC 33913 / DSM 3586 / NCPPB 528 / LMG 568 / P 25)</name>
    <dbReference type="NCBI Taxonomy" id="190485"/>
    <lineage>
        <taxon>Bacteria</taxon>
        <taxon>Pseudomonadati</taxon>
        <taxon>Pseudomonadota</taxon>
        <taxon>Gammaproteobacteria</taxon>
        <taxon>Lysobacterales</taxon>
        <taxon>Lysobacteraceae</taxon>
        <taxon>Xanthomonas</taxon>
    </lineage>
</organism>